<comment type="function">
    <text evidence="1">Catalyzes the reversible oxidation of malate to oxaloacetate.</text>
</comment>
<comment type="catalytic activity">
    <reaction evidence="1">
        <text>(S)-malate + NAD(+) = oxaloacetate + NADH + H(+)</text>
        <dbReference type="Rhea" id="RHEA:21432"/>
        <dbReference type="ChEBI" id="CHEBI:15378"/>
        <dbReference type="ChEBI" id="CHEBI:15589"/>
        <dbReference type="ChEBI" id="CHEBI:16452"/>
        <dbReference type="ChEBI" id="CHEBI:57540"/>
        <dbReference type="ChEBI" id="CHEBI:57945"/>
        <dbReference type="EC" id="1.1.1.37"/>
    </reaction>
</comment>
<comment type="similarity">
    <text evidence="1">Belongs to the LDH/MDH superfamily. MDH type 3 family.</text>
</comment>
<protein>
    <recommendedName>
        <fullName evidence="1">Malate dehydrogenase</fullName>
        <ecNumber evidence="1">1.1.1.37</ecNumber>
    </recommendedName>
</protein>
<organism>
    <name type="scientific">Caulobacter vibrioides (strain NA1000 / CB15N)</name>
    <name type="common">Caulobacter crescentus</name>
    <dbReference type="NCBI Taxonomy" id="565050"/>
    <lineage>
        <taxon>Bacteria</taxon>
        <taxon>Pseudomonadati</taxon>
        <taxon>Pseudomonadota</taxon>
        <taxon>Alphaproteobacteria</taxon>
        <taxon>Caulobacterales</taxon>
        <taxon>Caulobacteraceae</taxon>
        <taxon>Caulobacter</taxon>
    </lineage>
</organism>
<evidence type="ECO:0000255" key="1">
    <source>
        <dbReference type="HAMAP-Rule" id="MF_00487"/>
    </source>
</evidence>
<gene>
    <name evidence="1" type="primary">mdh</name>
    <name type="ordered locus">CCNA_03770</name>
</gene>
<sequence>MARAKIALIGAGMIGGTLAHIAAREELGDVILFDIAEGTPQGKALDIAEASAVFGKDVALKGANDYADIAGADVCIVTAGVPRKPGMSRDDLLGINLKVMKAVGEGIKAHAPNAFVICITNPLDAMVWALQQFSGLPKEKVIGMAGVLDSARFAYFLAEATGVSVEDIHAWTLGGHGDDMVPMVRHSTVGGLPLPELVKQGWLSQDKLDAIVERTRKGGGEIVALLKTGSAFYAPAESAIAMATSYLKDKKRVLPCATYLTGQYGLNDLYVGVPVVIGAGGAEKIVEFETNDDEKAMFAKSVESVKGLMEACKAIDSSLV</sequence>
<dbReference type="EC" id="1.1.1.37" evidence="1"/>
<dbReference type="EMBL" id="CP001340">
    <property type="protein sequence ID" value="ACL97235.1"/>
    <property type="molecule type" value="Genomic_DNA"/>
</dbReference>
<dbReference type="RefSeq" id="WP_010921482.1">
    <property type="nucleotide sequence ID" value="NC_011916.1"/>
</dbReference>
<dbReference type="RefSeq" id="YP_002519143.1">
    <property type="nucleotide sequence ID" value="NC_011916.1"/>
</dbReference>
<dbReference type="SMR" id="B8GVT2"/>
<dbReference type="GeneID" id="7331966"/>
<dbReference type="KEGG" id="ccs:CCNA_03770"/>
<dbReference type="PATRIC" id="fig|565050.3.peg.3674"/>
<dbReference type="HOGENOM" id="CLU_045401_2_1_5"/>
<dbReference type="OrthoDB" id="9802969at2"/>
<dbReference type="PhylomeDB" id="B8GVT2"/>
<dbReference type="Proteomes" id="UP000001364">
    <property type="component" value="Chromosome"/>
</dbReference>
<dbReference type="GO" id="GO:0004459">
    <property type="term" value="F:L-lactate dehydrogenase activity"/>
    <property type="evidence" value="ECO:0007669"/>
    <property type="project" value="TreeGrafter"/>
</dbReference>
<dbReference type="GO" id="GO:0030060">
    <property type="term" value="F:L-malate dehydrogenase (NAD+) activity"/>
    <property type="evidence" value="ECO:0007669"/>
    <property type="project" value="UniProtKB-UniRule"/>
</dbReference>
<dbReference type="GO" id="GO:0006089">
    <property type="term" value="P:lactate metabolic process"/>
    <property type="evidence" value="ECO:0007669"/>
    <property type="project" value="TreeGrafter"/>
</dbReference>
<dbReference type="GO" id="GO:0006099">
    <property type="term" value="P:tricarboxylic acid cycle"/>
    <property type="evidence" value="ECO:0007669"/>
    <property type="project" value="UniProtKB-UniRule"/>
</dbReference>
<dbReference type="CDD" id="cd01339">
    <property type="entry name" value="LDH-like_MDH"/>
    <property type="match status" value="1"/>
</dbReference>
<dbReference type="FunFam" id="3.40.50.720:FF:000018">
    <property type="entry name" value="Malate dehydrogenase"/>
    <property type="match status" value="1"/>
</dbReference>
<dbReference type="FunFam" id="3.90.110.10:FF:000004">
    <property type="entry name" value="Malate dehydrogenase"/>
    <property type="match status" value="1"/>
</dbReference>
<dbReference type="Gene3D" id="3.90.110.10">
    <property type="entry name" value="Lactate dehydrogenase/glycoside hydrolase, family 4, C-terminal"/>
    <property type="match status" value="1"/>
</dbReference>
<dbReference type="Gene3D" id="3.40.50.720">
    <property type="entry name" value="NAD(P)-binding Rossmann-like Domain"/>
    <property type="match status" value="1"/>
</dbReference>
<dbReference type="HAMAP" id="MF_00487">
    <property type="entry name" value="Malate_dehydrog_3"/>
    <property type="match status" value="1"/>
</dbReference>
<dbReference type="InterPro" id="IPR001557">
    <property type="entry name" value="L-lactate/malate_DH"/>
</dbReference>
<dbReference type="InterPro" id="IPR022383">
    <property type="entry name" value="Lactate/malate_DH_C"/>
</dbReference>
<dbReference type="InterPro" id="IPR001236">
    <property type="entry name" value="Lactate/malate_DH_N"/>
</dbReference>
<dbReference type="InterPro" id="IPR015955">
    <property type="entry name" value="Lactate_DH/Glyco_Ohase_4_C"/>
</dbReference>
<dbReference type="InterPro" id="IPR011275">
    <property type="entry name" value="Malate_DH_type3"/>
</dbReference>
<dbReference type="InterPro" id="IPR036291">
    <property type="entry name" value="NAD(P)-bd_dom_sf"/>
</dbReference>
<dbReference type="NCBIfam" id="TIGR01763">
    <property type="entry name" value="MalateDH_bact"/>
    <property type="match status" value="1"/>
</dbReference>
<dbReference type="NCBIfam" id="NF004863">
    <property type="entry name" value="PRK06223.1"/>
    <property type="match status" value="1"/>
</dbReference>
<dbReference type="PANTHER" id="PTHR43128">
    <property type="entry name" value="L-2-HYDROXYCARBOXYLATE DEHYDROGENASE (NAD(P)(+))"/>
    <property type="match status" value="1"/>
</dbReference>
<dbReference type="PANTHER" id="PTHR43128:SF16">
    <property type="entry name" value="L-LACTATE DEHYDROGENASE"/>
    <property type="match status" value="1"/>
</dbReference>
<dbReference type="Pfam" id="PF02866">
    <property type="entry name" value="Ldh_1_C"/>
    <property type="match status" value="1"/>
</dbReference>
<dbReference type="Pfam" id="PF00056">
    <property type="entry name" value="Ldh_1_N"/>
    <property type="match status" value="1"/>
</dbReference>
<dbReference type="PIRSF" id="PIRSF000102">
    <property type="entry name" value="Lac_mal_DH"/>
    <property type="match status" value="1"/>
</dbReference>
<dbReference type="PRINTS" id="PR00086">
    <property type="entry name" value="LLDHDRGNASE"/>
</dbReference>
<dbReference type="SUPFAM" id="SSF56327">
    <property type="entry name" value="LDH C-terminal domain-like"/>
    <property type="match status" value="1"/>
</dbReference>
<dbReference type="SUPFAM" id="SSF51735">
    <property type="entry name" value="NAD(P)-binding Rossmann-fold domains"/>
    <property type="match status" value="1"/>
</dbReference>
<name>MDH_CAUVN</name>
<keyword id="KW-0520">NAD</keyword>
<keyword id="KW-0560">Oxidoreductase</keyword>
<keyword id="KW-1185">Reference proteome</keyword>
<keyword id="KW-0816">Tricarboxylic acid cycle</keyword>
<accession>B8GVT2</accession>
<reference key="1">
    <citation type="journal article" date="2010" name="J. Bacteriol.">
        <title>The genetic basis of laboratory adaptation in Caulobacter crescentus.</title>
        <authorList>
            <person name="Marks M.E."/>
            <person name="Castro-Rojas C.M."/>
            <person name="Teiling C."/>
            <person name="Du L."/>
            <person name="Kapatral V."/>
            <person name="Walunas T.L."/>
            <person name="Crosson S."/>
        </authorList>
    </citation>
    <scope>NUCLEOTIDE SEQUENCE [LARGE SCALE GENOMIC DNA]</scope>
    <source>
        <strain>NA1000 / CB15N</strain>
    </source>
</reference>
<feature type="chain" id="PRO_1000191645" description="Malate dehydrogenase">
    <location>
        <begin position="1"/>
        <end position="320"/>
    </location>
</feature>
<feature type="active site" description="Proton acceptor" evidence="1">
    <location>
        <position position="176"/>
    </location>
</feature>
<feature type="binding site" evidence="1">
    <location>
        <begin position="10"/>
        <end position="15"/>
    </location>
    <ligand>
        <name>NAD(+)</name>
        <dbReference type="ChEBI" id="CHEBI:57540"/>
    </ligand>
</feature>
<feature type="binding site" evidence="1">
    <location>
        <position position="34"/>
    </location>
    <ligand>
        <name>NAD(+)</name>
        <dbReference type="ChEBI" id="CHEBI:57540"/>
    </ligand>
</feature>
<feature type="binding site" evidence="1">
    <location>
        <position position="83"/>
    </location>
    <ligand>
        <name>substrate</name>
    </ligand>
</feature>
<feature type="binding site" evidence="1">
    <location>
        <position position="89"/>
    </location>
    <ligand>
        <name>substrate</name>
    </ligand>
</feature>
<feature type="binding site" evidence="1">
    <location>
        <position position="96"/>
    </location>
    <ligand>
        <name>NAD(+)</name>
        <dbReference type="ChEBI" id="CHEBI:57540"/>
    </ligand>
</feature>
<feature type="binding site" evidence="1">
    <location>
        <begin position="119"/>
        <end position="121"/>
    </location>
    <ligand>
        <name>NAD(+)</name>
        <dbReference type="ChEBI" id="CHEBI:57540"/>
    </ligand>
</feature>
<feature type="binding site" evidence="1">
    <location>
        <position position="121"/>
    </location>
    <ligand>
        <name>substrate</name>
    </ligand>
</feature>
<feature type="binding site" evidence="1">
    <location>
        <position position="152"/>
    </location>
    <ligand>
        <name>substrate</name>
    </ligand>
</feature>
<proteinExistence type="inferred from homology"/>